<proteinExistence type="inferred from homology"/>
<comment type="function">
    <text evidence="1">Located at the top of the head of the 30S subunit, it contacts several helices of the 16S rRNA. In the 70S ribosome it contacts the 23S rRNA (bridge B1a) and protein L5 of the 50S subunit (bridge B1b), connecting the 2 subunits; these bridges are implicated in subunit movement. Contacts the tRNAs in the A and P-sites.</text>
</comment>
<comment type="subunit">
    <text evidence="1">Part of the 30S ribosomal subunit. Forms a loose heterodimer with protein S19. Forms two bridges to the 50S subunit in the 70S ribosome.</text>
</comment>
<comment type="similarity">
    <text evidence="1">Belongs to the universal ribosomal protein uS13 family.</text>
</comment>
<accession>B7HJ73</accession>
<dbReference type="EMBL" id="CP001176">
    <property type="protein sequence ID" value="ACK62021.1"/>
    <property type="molecule type" value="Genomic_DNA"/>
</dbReference>
<dbReference type="RefSeq" id="WP_000090788.1">
    <property type="nucleotide sequence ID" value="NZ_VEHB01000017.1"/>
</dbReference>
<dbReference type="SMR" id="B7HJ73"/>
<dbReference type="GeneID" id="93010918"/>
<dbReference type="KEGG" id="bcb:BCB4264_A0156"/>
<dbReference type="HOGENOM" id="CLU_103849_1_1_9"/>
<dbReference type="Proteomes" id="UP000007096">
    <property type="component" value="Chromosome"/>
</dbReference>
<dbReference type="GO" id="GO:0005829">
    <property type="term" value="C:cytosol"/>
    <property type="evidence" value="ECO:0007669"/>
    <property type="project" value="TreeGrafter"/>
</dbReference>
<dbReference type="GO" id="GO:0015935">
    <property type="term" value="C:small ribosomal subunit"/>
    <property type="evidence" value="ECO:0007669"/>
    <property type="project" value="TreeGrafter"/>
</dbReference>
<dbReference type="GO" id="GO:0019843">
    <property type="term" value="F:rRNA binding"/>
    <property type="evidence" value="ECO:0007669"/>
    <property type="project" value="UniProtKB-UniRule"/>
</dbReference>
<dbReference type="GO" id="GO:0003735">
    <property type="term" value="F:structural constituent of ribosome"/>
    <property type="evidence" value="ECO:0007669"/>
    <property type="project" value="InterPro"/>
</dbReference>
<dbReference type="GO" id="GO:0000049">
    <property type="term" value="F:tRNA binding"/>
    <property type="evidence" value="ECO:0007669"/>
    <property type="project" value="UniProtKB-UniRule"/>
</dbReference>
<dbReference type="GO" id="GO:0006412">
    <property type="term" value="P:translation"/>
    <property type="evidence" value="ECO:0007669"/>
    <property type="project" value="UniProtKB-UniRule"/>
</dbReference>
<dbReference type="FunFam" id="1.10.8.50:FF:000001">
    <property type="entry name" value="30S ribosomal protein S13"/>
    <property type="match status" value="1"/>
</dbReference>
<dbReference type="FunFam" id="4.10.910.10:FF:000001">
    <property type="entry name" value="30S ribosomal protein S13"/>
    <property type="match status" value="1"/>
</dbReference>
<dbReference type="Gene3D" id="1.10.8.50">
    <property type="match status" value="1"/>
</dbReference>
<dbReference type="Gene3D" id="4.10.910.10">
    <property type="entry name" value="30s ribosomal protein s13, domain 2"/>
    <property type="match status" value="1"/>
</dbReference>
<dbReference type="HAMAP" id="MF_01315">
    <property type="entry name" value="Ribosomal_uS13"/>
    <property type="match status" value="1"/>
</dbReference>
<dbReference type="InterPro" id="IPR027437">
    <property type="entry name" value="Rbsml_uS13_C"/>
</dbReference>
<dbReference type="InterPro" id="IPR001892">
    <property type="entry name" value="Ribosomal_uS13"/>
</dbReference>
<dbReference type="InterPro" id="IPR010979">
    <property type="entry name" value="Ribosomal_uS13-like_H2TH"/>
</dbReference>
<dbReference type="InterPro" id="IPR019980">
    <property type="entry name" value="Ribosomal_uS13_bac-type"/>
</dbReference>
<dbReference type="InterPro" id="IPR018269">
    <property type="entry name" value="Ribosomal_uS13_CS"/>
</dbReference>
<dbReference type="NCBIfam" id="TIGR03631">
    <property type="entry name" value="uS13_bact"/>
    <property type="match status" value="1"/>
</dbReference>
<dbReference type="PANTHER" id="PTHR10871">
    <property type="entry name" value="30S RIBOSOMAL PROTEIN S13/40S RIBOSOMAL PROTEIN S18"/>
    <property type="match status" value="1"/>
</dbReference>
<dbReference type="PANTHER" id="PTHR10871:SF1">
    <property type="entry name" value="SMALL RIBOSOMAL SUBUNIT PROTEIN US13M"/>
    <property type="match status" value="1"/>
</dbReference>
<dbReference type="Pfam" id="PF00416">
    <property type="entry name" value="Ribosomal_S13"/>
    <property type="match status" value="1"/>
</dbReference>
<dbReference type="PIRSF" id="PIRSF002134">
    <property type="entry name" value="Ribosomal_S13"/>
    <property type="match status" value="1"/>
</dbReference>
<dbReference type="SUPFAM" id="SSF46946">
    <property type="entry name" value="S13-like H2TH domain"/>
    <property type="match status" value="1"/>
</dbReference>
<dbReference type="PROSITE" id="PS00646">
    <property type="entry name" value="RIBOSOMAL_S13_1"/>
    <property type="match status" value="1"/>
</dbReference>
<dbReference type="PROSITE" id="PS50159">
    <property type="entry name" value="RIBOSOMAL_S13_2"/>
    <property type="match status" value="1"/>
</dbReference>
<reference key="1">
    <citation type="submission" date="2008-10" db="EMBL/GenBank/DDBJ databases">
        <title>Genome sequence of Bacillus cereus B4264.</title>
        <authorList>
            <person name="Dodson R.J."/>
            <person name="Durkin A.S."/>
            <person name="Rosovitz M.J."/>
            <person name="Rasko D.A."/>
            <person name="Hoffmaster A."/>
            <person name="Ravel J."/>
            <person name="Sutton G."/>
        </authorList>
    </citation>
    <scope>NUCLEOTIDE SEQUENCE [LARGE SCALE GENOMIC DNA]</scope>
    <source>
        <strain>B4264</strain>
    </source>
</reference>
<name>RS13_BACC4</name>
<protein>
    <recommendedName>
        <fullName evidence="1">Small ribosomal subunit protein uS13</fullName>
    </recommendedName>
    <alternativeName>
        <fullName evidence="3">30S ribosomal protein S13</fullName>
    </alternativeName>
</protein>
<organism>
    <name type="scientific">Bacillus cereus (strain B4264)</name>
    <dbReference type="NCBI Taxonomy" id="405532"/>
    <lineage>
        <taxon>Bacteria</taxon>
        <taxon>Bacillati</taxon>
        <taxon>Bacillota</taxon>
        <taxon>Bacilli</taxon>
        <taxon>Bacillales</taxon>
        <taxon>Bacillaceae</taxon>
        <taxon>Bacillus</taxon>
        <taxon>Bacillus cereus group</taxon>
    </lineage>
</organism>
<keyword id="KW-0687">Ribonucleoprotein</keyword>
<keyword id="KW-0689">Ribosomal protein</keyword>
<keyword id="KW-0694">RNA-binding</keyword>
<keyword id="KW-0699">rRNA-binding</keyword>
<keyword id="KW-0820">tRNA-binding</keyword>
<sequence length="121" mass="13819">MARIAGVDIPRDKRVVISLTYVFGIGRTTAEKILAEAGISEETRVRDLTEDELGRIRDIIDRIKVEGDLRREVSLNIKRLMEIGSYRGLRHRRGLPVRGQNSKNNARTRKGPRRTVANKKK</sequence>
<feature type="chain" id="PRO_1000141218" description="Small ribosomal subunit protein uS13">
    <location>
        <begin position="1"/>
        <end position="121"/>
    </location>
</feature>
<feature type="region of interest" description="Disordered" evidence="2">
    <location>
        <begin position="91"/>
        <end position="121"/>
    </location>
</feature>
<feature type="compositionally biased region" description="Basic residues" evidence="2">
    <location>
        <begin position="106"/>
        <end position="121"/>
    </location>
</feature>
<evidence type="ECO:0000255" key="1">
    <source>
        <dbReference type="HAMAP-Rule" id="MF_01315"/>
    </source>
</evidence>
<evidence type="ECO:0000256" key="2">
    <source>
        <dbReference type="SAM" id="MobiDB-lite"/>
    </source>
</evidence>
<evidence type="ECO:0000305" key="3"/>
<gene>
    <name evidence="1" type="primary">rpsM</name>
    <name type="ordered locus">BCB4264_A0156</name>
</gene>